<evidence type="ECO:0000255" key="1">
    <source>
        <dbReference type="HAMAP-Rule" id="MF_00034"/>
    </source>
</evidence>
<dbReference type="EC" id="3.1.21.10" evidence="1"/>
<dbReference type="EMBL" id="CP000847">
    <property type="protein sequence ID" value="ABV74506.1"/>
    <property type="molecule type" value="Genomic_DNA"/>
</dbReference>
<dbReference type="RefSeq" id="WP_012013376.1">
    <property type="nucleotide sequence ID" value="NC_009881.1"/>
</dbReference>
<dbReference type="SMR" id="A8GM81"/>
<dbReference type="STRING" id="293614.A1C_00880"/>
<dbReference type="KEGG" id="rak:A1C_00880"/>
<dbReference type="eggNOG" id="COG0817">
    <property type="taxonomic scope" value="Bacteria"/>
</dbReference>
<dbReference type="HOGENOM" id="CLU_091257_1_0_5"/>
<dbReference type="Proteomes" id="UP000006830">
    <property type="component" value="Chromosome"/>
</dbReference>
<dbReference type="GO" id="GO:0005737">
    <property type="term" value="C:cytoplasm"/>
    <property type="evidence" value="ECO:0007669"/>
    <property type="project" value="UniProtKB-SubCell"/>
</dbReference>
<dbReference type="GO" id="GO:0048476">
    <property type="term" value="C:Holliday junction resolvase complex"/>
    <property type="evidence" value="ECO:0007669"/>
    <property type="project" value="UniProtKB-UniRule"/>
</dbReference>
<dbReference type="GO" id="GO:0008821">
    <property type="term" value="F:crossover junction DNA endonuclease activity"/>
    <property type="evidence" value="ECO:0007669"/>
    <property type="project" value="UniProtKB-UniRule"/>
</dbReference>
<dbReference type="GO" id="GO:0003677">
    <property type="term" value="F:DNA binding"/>
    <property type="evidence" value="ECO:0007669"/>
    <property type="project" value="UniProtKB-KW"/>
</dbReference>
<dbReference type="GO" id="GO:0000287">
    <property type="term" value="F:magnesium ion binding"/>
    <property type="evidence" value="ECO:0007669"/>
    <property type="project" value="UniProtKB-UniRule"/>
</dbReference>
<dbReference type="GO" id="GO:0006310">
    <property type="term" value="P:DNA recombination"/>
    <property type="evidence" value="ECO:0007669"/>
    <property type="project" value="UniProtKB-UniRule"/>
</dbReference>
<dbReference type="GO" id="GO:0006281">
    <property type="term" value="P:DNA repair"/>
    <property type="evidence" value="ECO:0007669"/>
    <property type="project" value="UniProtKB-UniRule"/>
</dbReference>
<dbReference type="CDD" id="cd16962">
    <property type="entry name" value="RuvC"/>
    <property type="match status" value="1"/>
</dbReference>
<dbReference type="FunFam" id="3.30.420.10:FF:000002">
    <property type="entry name" value="Crossover junction endodeoxyribonuclease RuvC"/>
    <property type="match status" value="1"/>
</dbReference>
<dbReference type="Gene3D" id="3.30.420.10">
    <property type="entry name" value="Ribonuclease H-like superfamily/Ribonuclease H"/>
    <property type="match status" value="1"/>
</dbReference>
<dbReference type="HAMAP" id="MF_00034">
    <property type="entry name" value="RuvC"/>
    <property type="match status" value="1"/>
</dbReference>
<dbReference type="InterPro" id="IPR012337">
    <property type="entry name" value="RNaseH-like_sf"/>
</dbReference>
<dbReference type="InterPro" id="IPR036397">
    <property type="entry name" value="RNaseH_sf"/>
</dbReference>
<dbReference type="InterPro" id="IPR020563">
    <property type="entry name" value="X-over_junc_endoDNase_Mg_BS"/>
</dbReference>
<dbReference type="InterPro" id="IPR002176">
    <property type="entry name" value="X-over_junc_endoDNase_RuvC"/>
</dbReference>
<dbReference type="NCBIfam" id="TIGR00228">
    <property type="entry name" value="ruvC"/>
    <property type="match status" value="1"/>
</dbReference>
<dbReference type="PANTHER" id="PTHR30194">
    <property type="entry name" value="CROSSOVER JUNCTION ENDODEOXYRIBONUCLEASE RUVC"/>
    <property type="match status" value="1"/>
</dbReference>
<dbReference type="PANTHER" id="PTHR30194:SF3">
    <property type="entry name" value="CROSSOVER JUNCTION ENDODEOXYRIBONUCLEASE RUVC"/>
    <property type="match status" value="1"/>
</dbReference>
<dbReference type="Pfam" id="PF02075">
    <property type="entry name" value="RuvC"/>
    <property type="match status" value="1"/>
</dbReference>
<dbReference type="PRINTS" id="PR00696">
    <property type="entry name" value="RSOLVASERUVC"/>
</dbReference>
<dbReference type="SUPFAM" id="SSF53098">
    <property type="entry name" value="Ribonuclease H-like"/>
    <property type="match status" value="1"/>
</dbReference>
<dbReference type="PROSITE" id="PS01321">
    <property type="entry name" value="RUVC"/>
    <property type="match status" value="1"/>
</dbReference>
<organism>
    <name type="scientific">Rickettsia akari (strain Hartford)</name>
    <dbReference type="NCBI Taxonomy" id="293614"/>
    <lineage>
        <taxon>Bacteria</taxon>
        <taxon>Pseudomonadati</taxon>
        <taxon>Pseudomonadota</taxon>
        <taxon>Alphaproteobacteria</taxon>
        <taxon>Rickettsiales</taxon>
        <taxon>Rickettsiaceae</taxon>
        <taxon>Rickettsieae</taxon>
        <taxon>Rickettsia</taxon>
        <taxon>spotted fever group</taxon>
    </lineage>
</organism>
<comment type="function">
    <text evidence="1">The RuvA-RuvB-RuvC complex processes Holliday junction (HJ) DNA during genetic recombination and DNA repair. Endonuclease that resolves HJ intermediates. Cleaves cruciform DNA by making single-stranded nicks across the HJ at symmetrical positions within the homologous arms, yielding a 5'-phosphate and a 3'-hydroxyl group; requires a central core of homology in the junction. The consensus cleavage sequence is 5'-(A/T)TT(C/G)-3'. Cleavage occurs on the 3'-side of the TT dinucleotide at the point of strand exchange. HJ branch migration catalyzed by RuvA-RuvB allows RuvC to scan DNA until it finds its consensus sequence, where it cleaves and resolves the cruciform DNA.</text>
</comment>
<comment type="catalytic activity">
    <reaction evidence="1">
        <text>Endonucleolytic cleavage at a junction such as a reciprocal single-stranded crossover between two homologous DNA duplexes (Holliday junction).</text>
        <dbReference type="EC" id="3.1.21.10"/>
    </reaction>
</comment>
<comment type="cofactor">
    <cofactor evidence="1">
        <name>Mg(2+)</name>
        <dbReference type="ChEBI" id="CHEBI:18420"/>
    </cofactor>
    <text evidence="1">Binds 2 Mg(2+) ion per subunit.</text>
</comment>
<comment type="subunit">
    <text evidence="1">Homodimer which binds Holliday junction (HJ) DNA. The HJ becomes 2-fold symmetrical on binding to RuvC with unstacked arms; it has a different conformation from HJ DNA in complex with RuvA. In the full resolvosome a probable DNA-RuvA(4)-RuvB(12)-RuvC(2) complex forms which resolves the HJ.</text>
</comment>
<comment type="subcellular location">
    <subcellularLocation>
        <location evidence="1">Cytoplasm</location>
    </subcellularLocation>
</comment>
<comment type="similarity">
    <text evidence="1">Belongs to the RuvC family.</text>
</comment>
<keyword id="KW-0963">Cytoplasm</keyword>
<keyword id="KW-0227">DNA damage</keyword>
<keyword id="KW-0233">DNA recombination</keyword>
<keyword id="KW-0234">DNA repair</keyword>
<keyword id="KW-0238">DNA-binding</keyword>
<keyword id="KW-0255">Endonuclease</keyword>
<keyword id="KW-0378">Hydrolase</keyword>
<keyword id="KW-0460">Magnesium</keyword>
<keyword id="KW-0479">Metal-binding</keyword>
<keyword id="KW-0540">Nuclease</keyword>
<sequence>MIVLGIDPALGSLGWAVVARQLTKLKYLASGIIKTNSKDEIHNRLACINSTLEKVILEYQPNMAAIEETFVNTNSVTSLKLGYARGAIMSLCGRYNLDIREFKPNTVKKTVTGYGHAEKDQILHMIKLLLPGTSLITNSDEADAIAIAYTCHVMRVK</sequence>
<gene>
    <name evidence="1" type="primary">ruvC</name>
    <name type="ordered locus">A1C_00880</name>
</gene>
<feature type="chain" id="PRO_1000002818" description="Crossover junction endodeoxyribonuclease RuvC">
    <location>
        <begin position="1"/>
        <end position="157"/>
    </location>
</feature>
<feature type="active site" evidence="1">
    <location>
        <position position="7"/>
    </location>
</feature>
<feature type="active site" evidence="1">
    <location>
        <position position="67"/>
    </location>
</feature>
<feature type="active site" evidence="1">
    <location>
        <position position="140"/>
    </location>
</feature>
<feature type="binding site" evidence="1">
    <location>
        <position position="7"/>
    </location>
    <ligand>
        <name>Mg(2+)</name>
        <dbReference type="ChEBI" id="CHEBI:18420"/>
        <label>1</label>
    </ligand>
</feature>
<feature type="binding site" evidence="1">
    <location>
        <position position="67"/>
    </location>
    <ligand>
        <name>Mg(2+)</name>
        <dbReference type="ChEBI" id="CHEBI:18420"/>
        <label>2</label>
    </ligand>
</feature>
<feature type="binding site" evidence="1">
    <location>
        <position position="140"/>
    </location>
    <ligand>
        <name>Mg(2+)</name>
        <dbReference type="ChEBI" id="CHEBI:18420"/>
        <label>1</label>
    </ligand>
</feature>
<reference key="1">
    <citation type="submission" date="2007-09" db="EMBL/GenBank/DDBJ databases">
        <title>Complete genome sequence of Rickettsia akari.</title>
        <authorList>
            <person name="Madan A."/>
            <person name="Fahey J."/>
            <person name="Helton E."/>
            <person name="Ketteman M."/>
            <person name="Madan A."/>
            <person name="Rodrigues S."/>
            <person name="Sanchez A."/>
            <person name="Whiting M."/>
            <person name="Dasch G."/>
            <person name="Eremeeva M."/>
        </authorList>
    </citation>
    <scope>NUCLEOTIDE SEQUENCE [LARGE SCALE GENOMIC DNA]</scope>
    <source>
        <strain>Hartford</strain>
    </source>
</reference>
<proteinExistence type="inferred from homology"/>
<protein>
    <recommendedName>
        <fullName evidence="1">Crossover junction endodeoxyribonuclease RuvC</fullName>
        <ecNumber evidence="1">3.1.21.10</ecNumber>
    </recommendedName>
    <alternativeName>
        <fullName evidence="1">Holliday junction nuclease RuvC</fullName>
    </alternativeName>
    <alternativeName>
        <fullName evidence="1">Holliday junction resolvase RuvC</fullName>
    </alternativeName>
</protein>
<accession>A8GM81</accession>
<name>RUVC_RICAH</name>